<evidence type="ECO:0000255" key="1">
    <source>
        <dbReference type="HAMAP-Rule" id="MF_01606"/>
    </source>
</evidence>
<proteinExistence type="inferred from homology"/>
<comment type="function">
    <text evidence="1">Di-iron-containing protein involved in the repair of iron-sulfur clusters damaged by oxidative and nitrosative stress conditions.</text>
</comment>
<comment type="subunit">
    <text evidence="1">Homodimer.</text>
</comment>
<comment type="subcellular location">
    <subcellularLocation>
        <location evidence="1">Cytoplasm</location>
    </subcellularLocation>
</comment>
<comment type="similarity">
    <text evidence="1">Belongs to the RIC family. YtfE subfamily.</text>
</comment>
<accession>B1JML7</accession>
<feature type="chain" id="PRO_1000148193" description="Iron-sulfur cluster repair protein YtfE">
    <location>
        <begin position="1"/>
        <end position="221"/>
    </location>
</feature>
<sequence length="221" mass="25049">MDYRNQSLGALAIAIPRATKLFRQHQLDFCCGGKQTLLRAANKLNLDIDALEAQLSALQTEPHSSEDWQQQPLTNLISFIISRYHDRHREQLPELVLMAEKVERVHGDKPTCPRGLAAELSAILEELTQHMYKEEQILFPMIQRGMGSQASGPIFVMEAEHDAVGQQLDVVKQLTQNVTPPEGACNTWRALYTGINEFITDLMEHIHLENNLLFPRALRGE</sequence>
<reference key="1">
    <citation type="submission" date="2008-02" db="EMBL/GenBank/DDBJ databases">
        <title>Complete sequence of Yersinia pseudotuberculosis YPIII.</title>
        <authorList>
            <consortium name="US DOE Joint Genome Institute"/>
            <person name="Copeland A."/>
            <person name="Lucas S."/>
            <person name="Lapidus A."/>
            <person name="Glavina del Rio T."/>
            <person name="Dalin E."/>
            <person name="Tice H."/>
            <person name="Bruce D."/>
            <person name="Goodwin L."/>
            <person name="Pitluck S."/>
            <person name="Munk A.C."/>
            <person name="Brettin T."/>
            <person name="Detter J.C."/>
            <person name="Han C."/>
            <person name="Tapia R."/>
            <person name="Schmutz J."/>
            <person name="Larimer F."/>
            <person name="Land M."/>
            <person name="Hauser L."/>
            <person name="Challacombe J.F."/>
            <person name="Green L."/>
            <person name="Lindler L.E."/>
            <person name="Nikolich M.P."/>
            <person name="Richardson P."/>
        </authorList>
    </citation>
    <scope>NUCLEOTIDE SEQUENCE [LARGE SCALE GENOMIC DNA]</scope>
    <source>
        <strain>YPIII</strain>
    </source>
</reference>
<protein>
    <recommendedName>
        <fullName evidence="1">Iron-sulfur cluster repair protein YtfE</fullName>
    </recommendedName>
</protein>
<dbReference type="EMBL" id="CP000950">
    <property type="protein sequence ID" value="ACA70044.1"/>
    <property type="molecule type" value="Genomic_DNA"/>
</dbReference>
<dbReference type="RefSeq" id="WP_011191621.1">
    <property type="nucleotide sequence ID" value="NZ_CP009792.1"/>
</dbReference>
<dbReference type="SMR" id="B1JML7"/>
<dbReference type="KEGG" id="ypy:YPK_3777"/>
<dbReference type="PATRIC" id="fig|502800.11.peg.127"/>
<dbReference type="GO" id="GO:0005737">
    <property type="term" value="C:cytoplasm"/>
    <property type="evidence" value="ECO:0007669"/>
    <property type="project" value="UniProtKB-SubCell"/>
</dbReference>
<dbReference type="GO" id="GO:0046872">
    <property type="term" value="F:metal ion binding"/>
    <property type="evidence" value="ECO:0007669"/>
    <property type="project" value="UniProtKB-KW"/>
</dbReference>
<dbReference type="GO" id="GO:0030091">
    <property type="term" value="P:protein repair"/>
    <property type="evidence" value="ECO:0007669"/>
    <property type="project" value="UniProtKB-UniRule"/>
</dbReference>
<dbReference type="GO" id="GO:0051409">
    <property type="term" value="P:response to nitrosative stress"/>
    <property type="evidence" value="ECO:0007669"/>
    <property type="project" value="UniProtKB-UniRule"/>
</dbReference>
<dbReference type="GO" id="GO:0006979">
    <property type="term" value="P:response to oxidative stress"/>
    <property type="evidence" value="ECO:0007669"/>
    <property type="project" value="UniProtKB-UniRule"/>
</dbReference>
<dbReference type="CDD" id="cd12108">
    <property type="entry name" value="Hr-like"/>
    <property type="match status" value="1"/>
</dbReference>
<dbReference type="Gene3D" id="1.20.120.520">
    <property type="entry name" value="nmb1532 protein domain like"/>
    <property type="match status" value="1"/>
</dbReference>
<dbReference type="HAMAP" id="MF_01606">
    <property type="entry name" value="RIC_YtfE"/>
    <property type="match status" value="1"/>
</dbReference>
<dbReference type="InterPro" id="IPR023742">
    <property type="entry name" value="FeS-repair_YftE"/>
</dbReference>
<dbReference type="InterPro" id="IPR012312">
    <property type="entry name" value="Hemerythrin-like"/>
</dbReference>
<dbReference type="InterPro" id="IPR019903">
    <property type="entry name" value="RIC_family"/>
</dbReference>
<dbReference type="NCBIfam" id="TIGR03652">
    <property type="entry name" value="FeS_repair_RIC"/>
    <property type="match status" value="1"/>
</dbReference>
<dbReference type="NCBIfam" id="NF008221">
    <property type="entry name" value="PRK10992.1"/>
    <property type="match status" value="1"/>
</dbReference>
<dbReference type="PANTHER" id="PTHR36438">
    <property type="entry name" value="IRON-SULFUR CLUSTER REPAIR PROTEIN YTFE"/>
    <property type="match status" value="1"/>
</dbReference>
<dbReference type="PANTHER" id="PTHR36438:SF1">
    <property type="entry name" value="IRON-SULFUR CLUSTER REPAIR PROTEIN YTFE"/>
    <property type="match status" value="1"/>
</dbReference>
<dbReference type="Pfam" id="PF01814">
    <property type="entry name" value="Hemerythrin"/>
    <property type="match status" value="1"/>
</dbReference>
<dbReference type="Pfam" id="PF04405">
    <property type="entry name" value="ScdA_N"/>
    <property type="match status" value="1"/>
</dbReference>
<organism>
    <name type="scientific">Yersinia pseudotuberculosis serotype O:3 (strain YPIII)</name>
    <dbReference type="NCBI Taxonomy" id="502800"/>
    <lineage>
        <taxon>Bacteria</taxon>
        <taxon>Pseudomonadati</taxon>
        <taxon>Pseudomonadota</taxon>
        <taxon>Gammaproteobacteria</taxon>
        <taxon>Enterobacterales</taxon>
        <taxon>Yersiniaceae</taxon>
        <taxon>Yersinia</taxon>
    </lineage>
</organism>
<name>YTFE_YERPY</name>
<gene>
    <name evidence="1" type="primary">ytfE</name>
    <name type="ordered locus">YPK_3777</name>
</gene>
<keyword id="KW-0963">Cytoplasm</keyword>
<keyword id="KW-0408">Iron</keyword>
<keyword id="KW-0479">Metal-binding</keyword>
<keyword id="KW-0346">Stress response</keyword>